<proteinExistence type="inferred from homology"/>
<protein>
    <recommendedName>
        <fullName evidence="1">Elongation factor Ts</fullName>
        <shortName evidence="1">EF-Ts</shortName>
    </recommendedName>
</protein>
<sequence length="287" mass="30523">MAEITAALVKELRERTGEGMMDCKKALTKAGGDIEKAIDDMRASGAIKAAKKAGNVAAEGAIAIKDDGKAAVIIEVNSQTDFLALQDDFKAFVAASVEKAFADKLTDVAPLIEAQEAARLVLVGKVGENVNIRRLKRIEGDVVGTYLHGNKIGVVVTLKGGDVELAKDIAMHVAASNPEFLFPSEVSAEAIEREKNVFLQLNEDKIKGKPAEIVEKMVGGRITKFLAEASLVEQAFVKNPEVKVGDLAKKAGAEIVSFTYFKVGDGIEKPVDNFADEVAAQLAAAKQ</sequence>
<feature type="chain" id="PRO_0000241511" description="Elongation factor Ts">
    <location>
        <begin position="1"/>
        <end position="287"/>
    </location>
</feature>
<feature type="region of interest" description="Involved in Mg(2+) ion dislocation from EF-Tu" evidence="1">
    <location>
        <begin position="80"/>
        <end position="83"/>
    </location>
</feature>
<keyword id="KW-0963">Cytoplasm</keyword>
<keyword id="KW-0251">Elongation factor</keyword>
<keyword id="KW-0648">Protein biosynthesis</keyword>
<reference key="1">
    <citation type="journal article" date="2005" name="Proc. Natl. Acad. Sci. U.S.A.">
        <title>Comparison of the complete genome sequences of Pseudomonas syringae pv. syringae B728a and pv. tomato DC3000.</title>
        <authorList>
            <person name="Feil H."/>
            <person name="Feil W.S."/>
            <person name="Chain P."/>
            <person name="Larimer F."/>
            <person name="Dibartolo G."/>
            <person name="Copeland A."/>
            <person name="Lykidis A."/>
            <person name="Trong S."/>
            <person name="Nolan M."/>
            <person name="Goltsman E."/>
            <person name="Thiel J."/>
            <person name="Malfatti S."/>
            <person name="Loper J.E."/>
            <person name="Lapidus A."/>
            <person name="Detter J.C."/>
            <person name="Land M."/>
            <person name="Richardson P.M."/>
            <person name="Kyrpides N.C."/>
            <person name="Ivanova N."/>
            <person name="Lindow S.E."/>
        </authorList>
    </citation>
    <scope>NUCLEOTIDE SEQUENCE [LARGE SCALE GENOMIC DNA]</scope>
    <source>
        <strain>B728a</strain>
    </source>
</reference>
<name>EFTS_PSEU2</name>
<accession>Q4ZWS7</accession>
<gene>
    <name evidence="1" type="primary">tsf</name>
    <name type="ordered locus">Psyr_1344</name>
</gene>
<dbReference type="EMBL" id="CP000075">
    <property type="protein sequence ID" value="AAY36395.1"/>
    <property type="molecule type" value="Genomic_DNA"/>
</dbReference>
<dbReference type="RefSeq" id="WP_003415531.1">
    <property type="nucleotide sequence ID" value="NC_007005.1"/>
</dbReference>
<dbReference type="RefSeq" id="YP_234433.1">
    <property type="nucleotide sequence ID" value="NC_007005.1"/>
</dbReference>
<dbReference type="SMR" id="Q4ZWS7"/>
<dbReference type="STRING" id="205918.Psyr_1344"/>
<dbReference type="KEGG" id="psb:Psyr_1344"/>
<dbReference type="PATRIC" id="fig|205918.7.peg.1377"/>
<dbReference type="eggNOG" id="COG0264">
    <property type="taxonomic scope" value="Bacteria"/>
</dbReference>
<dbReference type="HOGENOM" id="CLU_047155_0_2_6"/>
<dbReference type="OrthoDB" id="9808348at2"/>
<dbReference type="Proteomes" id="UP000000426">
    <property type="component" value="Chromosome"/>
</dbReference>
<dbReference type="GO" id="GO:0005737">
    <property type="term" value="C:cytoplasm"/>
    <property type="evidence" value="ECO:0007669"/>
    <property type="project" value="UniProtKB-SubCell"/>
</dbReference>
<dbReference type="GO" id="GO:0003746">
    <property type="term" value="F:translation elongation factor activity"/>
    <property type="evidence" value="ECO:0007669"/>
    <property type="project" value="UniProtKB-UniRule"/>
</dbReference>
<dbReference type="CDD" id="cd14275">
    <property type="entry name" value="UBA_EF-Ts"/>
    <property type="match status" value="1"/>
</dbReference>
<dbReference type="FunFam" id="1.10.286.20:FF:000001">
    <property type="entry name" value="Elongation factor Ts"/>
    <property type="match status" value="1"/>
</dbReference>
<dbReference type="FunFam" id="1.10.8.10:FF:000001">
    <property type="entry name" value="Elongation factor Ts"/>
    <property type="match status" value="1"/>
</dbReference>
<dbReference type="Gene3D" id="1.10.286.20">
    <property type="match status" value="1"/>
</dbReference>
<dbReference type="Gene3D" id="1.10.8.10">
    <property type="entry name" value="DNA helicase RuvA subunit, C-terminal domain"/>
    <property type="match status" value="1"/>
</dbReference>
<dbReference type="Gene3D" id="3.30.479.20">
    <property type="entry name" value="Elongation factor Ts, dimerisation domain"/>
    <property type="match status" value="2"/>
</dbReference>
<dbReference type="HAMAP" id="MF_00050">
    <property type="entry name" value="EF_Ts"/>
    <property type="match status" value="1"/>
</dbReference>
<dbReference type="InterPro" id="IPR036402">
    <property type="entry name" value="EF-Ts_dimer_sf"/>
</dbReference>
<dbReference type="InterPro" id="IPR001816">
    <property type="entry name" value="Transl_elong_EFTs/EF1B"/>
</dbReference>
<dbReference type="InterPro" id="IPR014039">
    <property type="entry name" value="Transl_elong_EFTs/EF1B_dimer"/>
</dbReference>
<dbReference type="InterPro" id="IPR018101">
    <property type="entry name" value="Transl_elong_Ts_CS"/>
</dbReference>
<dbReference type="InterPro" id="IPR009060">
    <property type="entry name" value="UBA-like_sf"/>
</dbReference>
<dbReference type="NCBIfam" id="TIGR00116">
    <property type="entry name" value="tsf"/>
    <property type="match status" value="1"/>
</dbReference>
<dbReference type="PANTHER" id="PTHR11741">
    <property type="entry name" value="ELONGATION FACTOR TS"/>
    <property type="match status" value="1"/>
</dbReference>
<dbReference type="PANTHER" id="PTHR11741:SF0">
    <property type="entry name" value="ELONGATION FACTOR TS, MITOCHONDRIAL"/>
    <property type="match status" value="1"/>
</dbReference>
<dbReference type="Pfam" id="PF00889">
    <property type="entry name" value="EF_TS"/>
    <property type="match status" value="1"/>
</dbReference>
<dbReference type="SUPFAM" id="SSF54713">
    <property type="entry name" value="Elongation factor Ts (EF-Ts), dimerisation domain"/>
    <property type="match status" value="2"/>
</dbReference>
<dbReference type="SUPFAM" id="SSF46934">
    <property type="entry name" value="UBA-like"/>
    <property type="match status" value="1"/>
</dbReference>
<dbReference type="PROSITE" id="PS01126">
    <property type="entry name" value="EF_TS_1"/>
    <property type="match status" value="1"/>
</dbReference>
<dbReference type="PROSITE" id="PS01127">
    <property type="entry name" value="EF_TS_2"/>
    <property type="match status" value="1"/>
</dbReference>
<organism>
    <name type="scientific">Pseudomonas syringae pv. syringae (strain B728a)</name>
    <dbReference type="NCBI Taxonomy" id="205918"/>
    <lineage>
        <taxon>Bacteria</taxon>
        <taxon>Pseudomonadati</taxon>
        <taxon>Pseudomonadota</taxon>
        <taxon>Gammaproteobacteria</taxon>
        <taxon>Pseudomonadales</taxon>
        <taxon>Pseudomonadaceae</taxon>
        <taxon>Pseudomonas</taxon>
        <taxon>Pseudomonas syringae</taxon>
    </lineage>
</organism>
<evidence type="ECO:0000255" key="1">
    <source>
        <dbReference type="HAMAP-Rule" id="MF_00050"/>
    </source>
</evidence>
<comment type="function">
    <text evidence="1">Associates with the EF-Tu.GDP complex and induces the exchange of GDP to GTP. It remains bound to the aminoacyl-tRNA.EF-Tu.GTP complex up to the GTP hydrolysis stage on the ribosome.</text>
</comment>
<comment type="subcellular location">
    <subcellularLocation>
        <location evidence="1">Cytoplasm</location>
    </subcellularLocation>
</comment>
<comment type="similarity">
    <text evidence="1">Belongs to the EF-Ts family.</text>
</comment>